<name>MURD_BACC2</name>
<reference key="1">
    <citation type="submission" date="2008-10" db="EMBL/GenBank/DDBJ databases">
        <title>Genome sequence of Bacillus cereus G9842.</title>
        <authorList>
            <person name="Dodson R.J."/>
            <person name="Durkin A.S."/>
            <person name="Rosovitz M.J."/>
            <person name="Rasko D.A."/>
            <person name="Hoffmaster A."/>
            <person name="Ravel J."/>
            <person name="Sutton G."/>
        </authorList>
    </citation>
    <scope>NUCLEOTIDE SEQUENCE [LARGE SCALE GENOMIC DNA]</scope>
    <source>
        <strain>G9842</strain>
    </source>
</reference>
<proteinExistence type="inferred from homology"/>
<keyword id="KW-0067">ATP-binding</keyword>
<keyword id="KW-0131">Cell cycle</keyword>
<keyword id="KW-0132">Cell division</keyword>
<keyword id="KW-0133">Cell shape</keyword>
<keyword id="KW-0961">Cell wall biogenesis/degradation</keyword>
<keyword id="KW-0963">Cytoplasm</keyword>
<keyword id="KW-0436">Ligase</keyword>
<keyword id="KW-0547">Nucleotide-binding</keyword>
<keyword id="KW-0573">Peptidoglycan synthesis</keyword>
<sequence length="450" mass="48982">MKTVTEFQNKNILVLGIAKSGYAAATLLQKLGANVIVNDGKPLADNVLAAELQAKGMDVVCGGHPLELLERNISLVVKNPGIPYSNPILVAAKEKEIPIVTEVELAYRISKAPFVGITGSNGKTTTTMLTFEMLKEGQKHPVIAGNIGTVACEVAQDAKENEVVVTELSSFQLMGVESFQPKIAAFLNLFEAHLDYHGTKKEYGLAKANVFKNQTENDYSVINADDADVMELSADTKGQKILFSTTKEIEDGACIKDNALYFKGEKVVEVSDIVLPGQHNLENILAAMSIAKLLGTSNEAITVVLKRFTGVKHRLEYVTTINNRKFYNDSKATNMLATEKALSAFTQPIVLLAGGLDRGNEFDDLIPYFKNVKAIVTFGQTAPKLVRAAEKAGLDIIESVDTLDEAVVKAYAHSKEDDVVLLSPACASWDQFKTFEERGDIFIQAVHKLI</sequence>
<comment type="function">
    <text evidence="1">Cell wall formation. Catalyzes the addition of glutamate to the nucleotide precursor UDP-N-acetylmuramoyl-L-alanine (UMA).</text>
</comment>
<comment type="catalytic activity">
    <reaction evidence="1">
        <text>UDP-N-acetyl-alpha-D-muramoyl-L-alanine + D-glutamate + ATP = UDP-N-acetyl-alpha-D-muramoyl-L-alanyl-D-glutamate + ADP + phosphate + H(+)</text>
        <dbReference type="Rhea" id="RHEA:16429"/>
        <dbReference type="ChEBI" id="CHEBI:15378"/>
        <dbReference type="ChEBI" id="CHEBI:29986"/>
        <dbReference type="ChEBI" id="CHEBI:30616"/>
        <dbReference type="ChEBI" id="CHEBI:43474"/>
        <dbReference type="ChEBI" id="CHEBI:83898"/>
        <dbReference type="ChEBI" id="CHEBI:83900"/>
        <dbReference type="ChEBI" id="CHEBI:456216"/>
        <dbReference type="EC" id="6.3.2.9"/>
    </reaction>
</comment>
<comment type="pathway">
    <text evidence="1">Cell wall biogenesis; peptidoglycan biosynthesis.</text>
</comment>
<comment type="subcellular location">
    <subcellularLocation>
        <location evidence="1">Cytoplasm</location>
    </subcellularLocation>
</comment>
<comment type="similarity">
    <text evidence="1">Belongs to the MurCDEF family.</text>
</comment>
<evidence type="ECO:0000255" key="1">
    <source>
        <dbReference type="HAMAP-Rule" id="MF_00639"/>
    </source>
</evidence>
<dbReference type="EC" id="6.3.2.9" evidence="1"/>
<dbReference type="EMBL" id="CP001186">
    <property type="protein sequence ID" value="ACK97508.1"/>
    <property type="molecule type" value="Genomic_DNA"/>
</dbReference>
<dbReference type="RefSeq" id="WP_000860096.1">
    <property type="nucleotide sequence ID" value="NC_011772.1"/>
</dbReference>
<dbReference type="SMR" id="B7IUS2"/>
<dbReference type="KEGG" id="bcg:BCG9842_B1228"/>
<dbReference type="HOGENOM" id="CLU_032540_0_1_9"/>
<dbReference type="UniPathway" id="UPA00219"/>
<dbReference type="Proteomes" id="UP000006744">
    <property type="component" value="Chromosome"/>
</dbReference>
<dbReference type="GO" id="GO:0005737">
    <property type="term" value="C:cytoplasm"/>
    <property type="evidence" value="ECO:0007669"/>
    <property type="project" value="UniProtKB-SubCell"/>
</dbReference>
<dbReference type="GO" id="GO:0005524">
    <property type="term" value="F:ATP binding"/>
    <property type="evidence" value="ECO:0007669"/>
    <property type="project" value="UniProtKB-UniRule"/>
</dbReference>
<dbReference type="GO" id="GO:0008764">
    <property type="term" value="F:UDP-N-acetylmuramoylalanine-D-glutamate ligase activity"/>
    <property type="evidence" value="ECO:0007669"/>
    <property type="project" value="UniProtKB-UniRule"/>
</dbReference>
<dbReference type="GO" id="GO:0051301">
    <property type="term" value="P:cell division"/>
    <property type="evidence" value="ECO:0007669"/>
    <property type="project" value="UniProtKB-KW"/>
</dbReference>
<dbReference type="GO" id="GO:0071555">
    <property type="term" value="P:cell wall organization"/>
    <property type="evidence" value="ECO:0007669"/>
    <property type="project" value="UniProtKB-KW"/>
</dbReference>
<dbReference type="GO" id="GO:0009252">
    <property type="term" value="P:peptidoglycan biosynthetic process"/>
    <property type="evidence" value="ECO:0007669"/>
    <property type="project" value="UniProtKB-UniRule"/>
</dbReference>
<dbReference type="GO" id="GO:0008360">
    <property type="term" value="P:regulation of cell shape"/>
    <property type="evidence" value="ECO:0007669"/>
    <property type="project" value="UniProtKB-KW"/>
</dbReference>
<dbReference type="Gene3D" id="3.90.190.20">
    <property type="entry name" value="Mur ligase, C-terminal domain"/>
    <property type="match status" value="1"/>
</dbReference>
<dbReference type="Gene3D" id="3.40.1190.10">
    <property type="entry name" value="Mur-like, catalytic domain"/>
    <property type="match status" value="1"/>
</dbReference>
<dbReference type="Gene3D" id="3.40.50.720">
    <property type="entry name" value="NAD(P)-binding Rossmann-like Domain"/>
    <property type="match status" value="1"/>
</dbReference>
<dbReference type="HAMAP" id="MF_00639">
    <property type="entry name" value="MurD"/>
    <property type="match status" value="1"/>
</dbReference>
<dbReference type="InterPro" id="IPR036565">
    <property type="entry name" value="Mur-like_cat_sf"/>
</dbReference>
<dbReference type="InterPro" id="IPR004101">
    <property type="entry name" value="Mur_ligase_C"/>
</dbReference>
<dbReference type="InterPro" id="IPR036615">
    <property type="entry name" value="Mur_ligase_C_dom_sf"/>
</dbReference>
<dbReference type="InterPro" id="IPR013221">
    <property type="entry name" value="Mur_ligase_cen"/>
</dbReference>
<dbReference type="InterPro" id="IPR005762">
    <property type="entry name" value="MurD"/>
</dbReference>
<dbReference type="NCBIfam" id="TIGR01087">
    <property type="entry name" value="murD"/>
    <property type="match status" value="1"/>
</dbReference>
<dbReference type="PANTHER" id="PTHR43692">
    <property type="entry name" value="UDP-N-ACETYLMURAMOYLALANINE--D-GLUTAMATE LIGASE"/>
    <property type="match status" value="1"/>
</dbReference>
<dbReference type="PANTHER" id="PTHR43692:SF1">
    <property type="entry name" value="UDP-N-ACETYLMURAMOYLALANINE--D-GLUTAMATE LIGASE"/>
    <property type="match status" value="1"/>
</dbReference>
<dbReference type="Pfam" id="PF02875">
    <property type="entry name" value="Mur_ligase_C"/>
    <property type="match status" value="1"/>
</dbReference>
<dbReference type="Pfam" id="PF08245">
    <property type="entry name" value="Mur_ligase_M"/>
    <property type="match status" value="1"/>
</dbReference>
<dbReference type="Pfam" id="PF21799">
    <property type="entry name" value="MurD-like_N"/>
    <property type="match status" value="1"/>
</dbReference>
<dbReference type="SUPFAM" id="SSF51984">
    <property type="entry name" value="MurCD N-terminal domain"/>
    <property type="match status" value="1"/>
</dbReference>
<dbReference type="SUPFAM" id="SSF53623">
    <property type="entry name" value="MurD-like peptide ligases, catalytic domain"/>
    <property type="match status" value="1"/>
</dbReference>
<dbReference type="SUPFAM" id="SSF53244">
    <property type="entry name" value="MurD-like peptide ligases, peptide-binding domain"/>
    <property type="match status" value="1"/>
</dbReference>
<organism>
    <name type="scientific">Bacillus cereus (strain G9842)</name>
    <dbReference type="NCBI Taxonomy" id="405531"/>
    <lineage>
        <taxon>Bacteria</taxon>
        <taxon>Bacillati</taxon>
        <taxon>Bacillota</taxon>
        <taxon>Bacilli</taxon>
        <taxon>Bacillales</taxon>
        <taxon>Bacillaceae</taxon>
        <taxon>Bacillus</taxon>
        <taxon>Bacillus cereus group</taxon>
    </lineage>
</organism>
<gene>
    <name evidence="1" type="primary">murD</name>
    <name type="ordered locus">BCG9842_B1228</name>
</gene>
<protein>
    <recommendedName>
        <fullName evidence="1">UDP-N-acetylmuramoylalanine--D-glutamate ligase</fullName>
        <ecNumber evidence="1">6.3.2.9</ecNumber>
    </recommendedName>
    <alternativeName>
        <fullName evidence="1">D-glutamic acid-adding enzyme</fullName>
    </alternativeName>
    <alternativeName>
        <fullName evidence="1">UDP-N-acetylmuramoyl-L-alanyl-D-glutamate synthetase</fullName>
    </alternativeName>
</protein>
<accession>B7IUS2</accession>
<feature type="chain" id="PRO_1000130825" description="UDP-N-acetylmuramoylalanine--D-glutamate ligase">
    <location>
        <begin position="1"/>
        <end position="450"/>
    </location>
</feature>
<feature type="binding site" evidence="1">
    <location>
        <begin position="119"/>
        <end position="125"/>
    </location>
    <ligand>
        <name>ATP</name>
        <dbReference type="ChEBI" id="CHEBI:30616"/>
    </ligand>
</feature>